<name>RL11_PSE14</name>
<gene>
    <name evidence="1" type="primary">rplK</name>
    <name type="ordered locus">PSPPH_4603</name>
</gene>
<accession>Q48D25</accession>
<feature type="chain" id="PRO_0000258189" description="Large ribosomal subunit protein uL11">
    <location>
        <begin position="1"/>
        <end position="143"/>
    </location>
</feature>
<comment type="function">
    <text evidence="1">Forms part of the ribosomal stalk which helps the ribosome interact with GTP-bound translation factors.</text>
</comment>
<comment type="subunit">
    <text evidence="1">Part of the ribosomal stalk of the 50S ribosomal subunit. Interacts with L10 and the large rRNA to form the base of the stalk. L10 forms an elongated spine to which L12 dimers bind in a sequential fashion forming a multimeric L10(L12)X complex.</text>
</comment>
<comment type="PTM">
    <text evidence="1">One or more lysine residues are methylated.</text>
</comment>
<comment type="similarity">
    <text evidence="1">Belongs to the universal ribosomal protein uL11 family.</text>
</comment>
<evidence type="ECO:0000255" key="1">
    <source>
        <dbReference type="HAMAP-Rule" id="MF_00736"/>
    </source>
</evidence>
<evidence type="ECO:0000305" key="2"/>
<organism>
    <name type="scientific">Pseudomonas savastanoi pv. phaseolicola (strain 1448A / Race 6)</name>
    <name type="common">Pseudomonas syringae pv. phaseolicola (strain 1448A / Race 6)</name>
    <dbReference type="NCBI Taxonomy" id="264730"/>
    <lineage>
        <taxon>Bacteria</taxon>
        <taxon>Pseudomonadati</taxon>
        <taxon>Pseudomonadota</taxon>
        <taxon>Gammaproteobacteria</taxon>
        <taxon>Pseudomonadales</taxon>
        <taxon>Pseudomonadaceae</taxon>
        <taxon>Pseudomonas</taxon>
    </lineage>
</organism>
<dbReference type="EMBL" id="CP000058">
    <property type="protein sequence ID" value="AAZ36737.1"/>
    <property type="molecule type" value="Genomic_DNA"/>
</dbReference>
<dbReference type="RefSeq" id="WP_011169632.1">
    <property type="nucleotide sequence ID" value="NC_005773.3"/>
</dbReference>
<dbReference type="SMR" id="Q48D25"/>
<dbReference type="KEGG" id="psp:PSPPH_4603"/>
<dbReference type="eggNOG" id="COG0080">
    <property type="taxonomic scope" value="Bacteria"/>
</dbReference>
<dbReference type="HOGENOM" id="CLU_074237_2_0_6"/>
<dbReference type="Proteomes" id="UP000000551">
    <property type="component" value="Chromosome"/>
</dbReference>
<dbReference type="GO" id="GO:0022625">
    <property type="term" value="C:cytosolic large ribosomal subunit"/>
    <property type="evidence" value="ECO:0007669"/>
    <property type="project" value="TreeGrafter"/>
</dbReference>
<dbReference type="GO" id="GO:0070180">
    <property type="term" value="F:large ribosomal subunit rRNA binding"/>
    <property type="evidence" value="ECO:0007669"/>
    <property type="project" value="UniProtKB-UniRule"/>
</dbReference>
<dbReference type="GO" id="GO:0003735">
    <property type="term" value="F:structural constituent of ribosome"/>
    <property type="evidence" value="ECO:0007669"/>
    <property type="project" value="InterPro"/>
</dbReference>
<dbReference type="GO" id="GO:0006412">
    <property type="term" value="P:translation"/>
    <property type="evidence" value="ECO:0007669"/>
    <property type="project" value="UniProtKB-UniRule"/>
</dbReference>
<dbReference type="CDD" id="cd00349">
    <property type="entry name" value="Ribosomal_L11"/>
    <property type="match status" value="1"/>
</dbReference>
<dbReference type="FunFam" id="1.10.10.250:FF:000001">
    <property type="entry name" value="50S ribosomal protein L11"/>
    <property type="match status" value="1"/>
</dbReference>
<dbReference type="FunFam" id="3.30.1550.10:FF:000001">
    <property type="entry name" value="50S ribosomal protein L11"/>
    <property type="match status" value="1"/>
</dbReference>
<dbReference type="Gene3D" id="1.10.10.250">
    <property type="entry name" value="Ribosomal protein L11, C-terminal domain"/>
    <property type="match status" value="1"/>
</dbReference>
<dbReference type="Gene3D" id="3.30.1550.10">
    <property type="entry name" value="Ribosomal protein L11/L12, N-terminal domain"/>
    <property type="match status" value="1"/>
</dbReference>
<dbReference type="HAMAP" id="MF_00736">
    <property type="entry name" value="Ribosomal_uL11"/>
    <property type="match status" value="1"/>
</dbReference>
<dbReference type="InterPro" id="IPR000911">
    <property type="entry name" value="Ribosomal_uL11"/>
</dbReference>
<dbReference type="InterPro" id="IPR006519">
    <property type="entry name" value="Ribosomal_uL11_bac-typ"/>
</dbReference>
<dbReference type="InterPro" id="IPR020783">
    <property type="entry name" value="Ribosomal_uL11_C"/>
</dbReference>
<dbReference type="InterPro" id="IPR036769">
    <property type="entry name" value="Ribosomal_uL11_C_sf"/>
</dbReference>
<dbReference type="InterPro" id="IPR020785">
    <property type="entry name" value="Ribosomal_uL11_CS"/>
</dbReference>
<dbReference type="InterPro" id="IPR020784">
    <property type="entry name" value="Ribosomal_uL11_N"/>
</dbReference>
<dbReference type="InterPro" id="IPR036796">
    <property type="entry name" value="Ribosomal_uL11_N_sf"/>
</dbReference>
<dbReference type="NCBIfam" id="TIGR01632">
    <property type="entry name" value="L11_bact"/>
    <property type="match status" value="1"/>
</dbReference>
<dbReference type="PANTHER" id="PTHR11661">
    <property type="entry name" value="60S RIBOSOMAL PROTEIN L12"/>
    <property type="match status" value="1"/>
</dbReference>
<dbReference type="PANTHER" id="PTHR11661:SF1">
    <property type="entry name" value="LARGE RIBOSOMAL SUBUNIT PROTEIN UL11M"/>
    <property type="match status" value="1"/>
</dbReference>
<dbReference type="Pfam" id="PF00298">
    <property type="entry name" value="Ribosomal_L11"/>
    <property type="match status" value="1"/>
</dbReference>
<dbReference type="Pfam" id="PF03946">
    <property type="entry name" value="Ribosomal_L11_N"/>
    <property type="match status" value="1"/>
</dbReference>
<dbReference type="SMART" id="SM00649">
    <property type="entry name" value="RL11"/>
    <property type="match status" value="1"/>
</dbReference>
<dbReference type="SUPFAM" id="SSF54747">
    <property type="entry name" value="Ribosomal L11/L12e N-terminal domain"/>
    <property type="match status" value="1"/>
</dbReference>
<dbReference type="SUPFAM" id="SSF46906">
    <property type="entry name" value="Ribosomal protein L11, C-terminal domain"/>
    <property type="match status" value="1"/>
</dbReference>
<dbReference type="PROSITE" id="PS00359">
    <property type="entry name" value="RIBOSOMAL_L11"/>
    <property type="match status" value="1"/>
</dbReference>
<reference key="1">
    <citation type="journal article" date="2005" name="J. Bacteriol.">
        <title>Whole-genome sequence analysis of Pseudomonas syringae pv. phaseolicola 1448A reveals divergence among pathovars in genes involved in virulence and transposition.</title>
        <authorList>
            <person name="Joardar V."/>
            <person name="Lindeberg M."/>
            <person name="Jackson R.W."/>
            <person name="Selengut J."/>
            <person name="Dodson R."/>
            <person name="Brinkac L.M."/>
            <person name="Daugherty S.C."/>
            <person name="DeBoy R.T."/>
            <person name="Durkin A.S."/>
            <person name="Gwinn Giglio M."/>
            <person name="Madupu R."/>
            <person name="Nelson W.C."/>
            <person name="Rosovitz M.J."/>
            <person name="Sullivan S.A."/>
            <person name="Crabtree J."/>
            <person name="Creasy T."/>
            <person name="Davidsen T.M."/>
            <person name="Haft D.H."/>
            <person name="Zafar N."/>
            <person name="Zhou L."/>
            <person name="Halpin R."/>
            <person name="Holley T."/>
            <person name="Khouri H.M."/>
            <person name="Feldblyum T.V."/>
            <person name="White O."/>
            <person name="Fraser C.M."/>
            <person name="Chatterjee A.K."/>
            <person name="Cartinhour S."/>
            <person name="Schneider D."/>
            <person name="Mansfield J.W."/>
            <person name="Collmer A."/>
            <person name="Buell R."/>
        </authorList>
    </citation>
    <scope>NUCLEOTIDE SEQUENCE [LARGE SCALE GENOMIC DNA]</scope>
    <source>
        <strain>1448A / Race 6</strain>
    </source>
</reference>
<sequence length="143" mass="14863">MAKKITAYIKLQVKAAQANPSPPVGPALGQHGVNIMEFCKAFNARTQGIEPGLPTPVIITVYSDRSFTFETKSTPASVLLKKAAGLTSGSAHPNTVKVGTVTRAQLEDIAKAKNADLTAADMEAAVRTIAGSARSMGLNVEGV</sequence>
<keyword id="KW-0488">Methylation</keyword>
<keyword id="KW-0687">Ribonucleoprotein</keyword>
<keyword id="KW-0689">Ribosomal protein</keyword>
<keyword id="KW-0694">RNA-binding</keyword>
<keyword id="KW-0699">rRNA-binding</keyword>
<protein>
    <recommendedName>
        <fullName evidence="1">Large ribosomal subunit protein uL11</fullName>
    </recommendedName>
    <alternativeName>
        <fullName evidence="2">50S ribosomal protein L11</fullName>
    </alternativeName>
</protein>
<proteinExistence type="inferred from homology"/>